<proteinExistence type="inferred from homology"/>
<reference key="1">
    <citation type="journal article" date="2009" name="BMC Genomics">
        <title>Metabolic analysis of the soil microbe Dechloromonas aromatica str. RCB: indications of a surprisingly complex life-style and cryptic anaerobic pathways for aromatic degradation.</title>
        <authorList>
            <person name="Salinero K.K."/>
            <person name="Keller K."/>
            <person name="Feil W.S."/>
            <person name="Feil H."/>
            <person name="Trong S."/>
            <person name="Di Bartolo G."/>
            <person name="Lapidus A."/>
        </authorList>
    </citation>
    <scope>NUCLEOTIDE SEQUENCE [LARGE SCALE GENOMIC DNA]</scope>
    <source>
        <strain>RCB</strain>
    </source>
</reference>
<keyword id="KW-0997">Cell inner membrane</keyword>
<keyword id="KW-1003">Cell membrane</keyword>
<keyword id="KW-0407">Ion channel</keyword>
<keyword id="KW-0406">Ion transport</keyword>
<keyword id="KW-0472">Membrane</keyword>
<keyword id="KW-0479">Metal-binding</keyword>
<keyword id="KW-0915">Sodium</keyword>
<keyword id="KW-0812">Transmembrane</keyword>
<keyword id="KW-1133">Transmembrane helix</keyword>
<keyword id="KW-0813">Transport</keyword>
<organism>
    <name type="scientific">Dechloromonas aromatica (strain RCB)</name>
    <dbReference type="NCBI Taxonomy" id="159087"/>
    <lineage>
        <taxon>Bacteria</taxon>
        <taxon>Pseudomonadati</taxon>
        <taxon>Pseudomonadota</taxon>
        <taxon>Betaproteobacteria</taxon>
        <taxon>Rhodocyclales</taxon>
        <taxon>Azonexaceae</taxon>
        <taxon>Dechloromonas</taxon>
    </lineage>
</organism>
<accession>Q47AF6</accession>
<gene>
    <name evidence="1" type="primary">fluC</name>
    <name evidence="1" type="synonym">crcB</name>
    <name type="ordered locus">Daro_3446</name>
</gene>
<protein>
    <recommendedName>
        <fullName evidence="1">Fluoride-specific ion channel FluC</fullName>
    </recommendedName>
</protein>
<sequence>MSALHQLSALNFLVIGLGAAFGAWTRWLLGLSLNPLFVALPLGTLAANVIGGYLVGVAVGIFHINTHFSLAWKLFAITGFLGGLTTFSTFSAEVVERLLAGQPAWAIGLASVHLAGSLTATYLGLLTVGATRIWA</sequence>
<evidence type="ECO:0000255" key="1">
    <source>
        <dbReference type="HAMAP-Rule" id="MF_00454"/>
    </source>
</evidence>
<name>FLUC_DECAR</name>
<comment type="function">
    <text evidence="1">Fluoride-specific ion channel. Important for reducing fluoride concentration in the cell, thus reducing its toxicity.</text>
</comment>
<comment type="catalytic activity">
    <reaction evidence="1">
        <text>fluoride(in) = fluoride(out)</text>
        <dbReference type="Rhea" id="RHEA:76159"/>
        <dbReference type="ChEBI" id="CHEBI:17051"/>
    </reaction>
    <physiologicalReaction direction="left-to-right" evidence="1">
        <dbReference type="Rhea" id="RHEA:76160"/>
    </physiologicalReaction>
</comment>
<comment type="activity regulation">
    <text evidence="1">Na(+) is not transported, but it plays an essential structural role and its presence is essential for fluoride channel function.</text>
</comment>
<comment type="subcellular location">
    <subcellularLocation>
        <location evidence="1">Cell inner membrane</location>
        <topology evidence="1">Multi-pass membrane protein</topology>
    </subcellularLocation>
</comment>
<comment type="similarity">
    <text evidence="1">Belongs to the fluoride channel Fluc/FEX (TC 1.A.43) family.</text>
</comment>
<dbReference type="EMBL" id="CP000089">
    <property type="protein sequence ID" value="AAZ48175.1"/>
    <property type="molecule type" value="Genomic_DNA"/>
</dbReference>
<dbReference type="SMR" id="Q47AF6"/>
<dbReference type="STRING" id="159087.Daro_3446"/>
<dbReference type="KEGG" id="dar:Daro_3446"/>
<dbReference type="eggNOG" id="COG0239">
    <property type="taxonomic scope" value="Bacteria"/>
</dbReference>
<dbReference type="HOGENOM" id="CLU_114342_3_3_4"/>
<dbReference type="OrthoDB" id="9806299at2"/>
<dbReference type="GO" id="GO:0005886">
    <property type="term" value="C:plasma membrane"/>
    <property type="evidence" value="ECO:0007669"/>
    <property type="project" value="UniProtKB-SubCell"/>
</dbReference>
<dbReference type="GO" id="GO:0062054">
    <property type="term" value="F:fluoride channel activity"/>
    <property type="evidence" value="ECO:0007669"/>
    <property type="project" value="UniProtKB-UniRule"/>
</dbReference>
<dbReference type="GO" id="GO:0046872">
    <property type="term" value="F:metal ion binding"/>
    <property type="evidence" value="ECO:0007669"/>
    <property type="project" value="UniProtKB-KW"/>
</dbReference>
<dbReference type="GO" id="GO:0140114">
    <property type="term" value="P:cellular detoxification of fluoride"/>
    <property type="evidence" value="ECO:0007669"/>
    <property type="project" value="UniProtKB-UniRule"/>
</dbReference>
<dbReference type="HAMAP" id="MF_00454">
    <property type="entry name" value="FluC"/>
    <property type="match status" value="1"/>
</dbReference>
<dbReference type="InterPro" id="IPR003691">
    <property type="entry name" value="FluC"/>
</dbReference>
<dbReference type="NCBIfam" id="TIGR00494">
    <property type="entry name" value="crcB"/>
    <property type="match status" value="1"/>
</dbReference>
<dbReference type="NCBIfam" id="NF010792">
    <property type="entry name" value="PRK14196.1"/>
    <property type="match status" value="1"/>
</dbReference>
<dbReference type="PANTHER" id="PTHR28259">
    <property type="entry name" value="FLUORIDE EXPORT PROTEIN 1-RELATED"/>
    <property type="match status" value="1"/>
</dbReference>
<dbReference type="PANTHER" id="PTHR28259:SF1">
    <property type="entry name" value="FLUORIDE EXPORT PROTEIN 1-RELATED"/>
    <property type="match status" value="1"/>
</dbReference>
<dbReference type="Pfam" id="PF02537">
    <property type="entry name" value="CRCB"/>
    <property type="match status" value="1"/>
</dbReference>
<feature type="chain" id="PRO_0000252872" description="Fluoride-specific ion channel FluC">
    <location>
        <begin position="1"/>
        <end position="135"/>
    </location>
</feature>
<feature type="transmembrane region" description="Helical" evidence="1">
    <location>
        <begin position="12"/>
        <end position="32"/>
    </location>
</feature>
<feature type="transmembrane region" description="Helical" evidence="1">
    <location>
        <begin position="42"/>
        <end position="62"/>
    </location>
</feature>
<feature type="transmembrane region" description="Helical" evidence="1">
    <location>
        <begin position="70"/>
        <end position="90"/>
    </location>
</feature>
<feature type="transmembrane region" description="Helical" evidence="1">
    <location>
        <begin position="106"/>
        <end position="126"/>
    </location>
</feature>
<feature type="binding site" evidence="1">
    <location>
        <position position="82"/>
    </location>
    <ligand>
        <name>Na(+)</name>
        <dbReference type="ChEBI" id="CHEBI:29101"/>
        <note>structural</note>
    </ligand>
</feature>
<feature type="binding site" evidence="1">
    <location>
        <position position="85"/>
    </location>
    <ligand>
        <name>Na(+)</name>
        <dbReference type="ChEBI" id="CHEBI:29101"/>
        <note>structural</note>
    </ligand>
</feature>